<accession>A2C0V4</accession>
<protein>
    <recommendedName>
        <fullName evidence="1">Porphobilinogen deaminase</fullName>
        <shortName evidence="1">PBG</shortName>
        <ecNumber evidence="1">2.5.1.61</ecNumber>
    </recommendedName>
    <alternativeName>
        <fullName evidence="1">Hydroxymethylbilane synthase</fullName>
        <shortName evidence="1">HMBS</shortName>
    </alternativeName>
    <alternativeName>
        <fullName evidence="1">Pre-uroporphyrinogen synthase</fullName>
    </alternativeName>
</protein>
<feature type="chain" id="PRO_0000304263" description="Porphobilinogen deaminase">
    <location>
        <begin position="1"/>
        <end position="315"/>
    </location>
</feature>
<feature type="modified residue" description="S-(dipyrrolylmethanemethyl)cysteine" evidence="1">
    <location>
        <position position="245"/>
    </location>
</feature>
<reference key="1">
    <citation type="journal article" date="2007" name="PLoS Genet.">
        <title>Patterns and implications of gene gain and loss in the evolution of Prochlorococcus.</title>
        <authorList>
            <person name="Kettler G.C."/>
            <person name="Martiny A.C."/>
            <person name="Huang K."/>
            <person name="Zucker J."/>
            <person name="Coleman M.L."/>
            <person name="Rodrigue S."/>
            <person name="Chen F."/>
            <person name="Lapidus A."/>
            <person name="Ferriera S."/>
            <person name="Johnson J."/>
            <person name="Steglich C."/>
            <person name="Church G.M."/>
            <person name="Richardson P."/>
            <person name="Chisholm S.W."/>
        </authorList>
    </citation>
    <scope>NUCLEOTIDE SEQUENCE [LARGE SCALE GENOMIC DNA]</scope>
    <source>
        <strain>NATL1A</strain>
    </source>
</reference>
<dbReference type="EC" id="2.5.1.61" evidence="1"/>
<dbReference type="EMBL" id="CP000553">
    <property type="protein sequence ID" value="ABM75114.1"/>
    <property type="molecule type" value="Genomic_DNA"/>
</dbReference>
<dbReference type="RefSeq" id="WP_011823291.1">
    <property type="nucleotide sequence ID" value="NC_008819.1"/>
</dbReference>
<dbReference type="SMR" id="A2C0V4"/>
<dbReference type="KEGG" id="pme:NATL1_05521"/>
<dbReference type="eggNOG" id="COG0181">
    <property type="taxonomic scope" value="Bacteria"/>
</dbReference>
<dbReference type="HOGENOM" id="CLU_019704_0_1_3"/>
<dbReference type="UniPathway" id="UPA00251">
    <property type="reaction ID" value="UER00319"/>
</dbReference>
<dbReference type="UniPathway" id="UPA00668"/>
<dbReference type="Proteomes" id="UP000002592">
    <property type="component" value="Chromosome"/>
</dbReference>
<dbReference type="GO" id="GO:0005737">
    <property type="term" value="C:cytoplasm"/>
    <property type="evidence" value="ECO:0007669"/>
    <property type="project" value="TreeGrafter"/>
</dbReference>
<dbReference type="GO" id="GO:0004418">
    <property type="term" value="F:hydroxymethylbilane synthase activity"/>
    <property type="evidence" value="ECO:0007669"/>
    <property type="project" value="UniProtKB-UniRule"/>
</dbReference>
<dbReference type="GO" id="GO:0015995">
    <property type="term" value="P:chlorophyll biosynthetic process"/>
    <property type="evidence" value="ECO:0007669"/>
    <property type="project" value="UniProtKB-UniRule"/>
</dbReference>
<dbReference type="GO" id="GO:0006782">
    <property type="term" value="P:protoporphyrinogen IX biosynthetic process"/>
    <property type="evidence" value="ECO:0007669"/>
    <property type="project" value="UniProtKB-UniRule"/>
</dbReference>
<dbReference type="CDD" id="cd13645">
    <property type="entry name" value="PBP2_HuPBGD_like"/>
    <property type="match status" value="1"/>
</dbReference>
<dbReference type="FunFam" id="3.30.160.40:FF:000002">
    <property type="entry name" value="Porphobilinogen deaminase"/>
    <property type="match status" value="1"/>
</dbReference>
<dbReference type="FunFam" id="3.40.190.10:FF:000004">
    <property type="entry name" value="Porphobilinogen deaminase"/>
    <property type="match status" value="1"/>
</dbReference>
<dbReference type="FunFam" id="3.40.190.10:FF:000005">
    <property type="entry name" value="Porphobilinogen deaminase"/>
    <property type="match status" value="1"/>
</dbReference>
<dbReference type="Gene3D" id="3.40.190.10">
    <property type="entry name" value="Periplasmic binding protein-like II"/>
    <property type="match status" value="2"/>
</dbReference>
<dbReference type="Gene3D" id="3.30.160.40">
    <property type="entry name" value="Porphobilinogen deaminase, C-terminal domain"/>
    <property type="match status" value="1"/>
</dbReference>
<dbReference type="HAMAP" id="MF_00260">
    <property type="entry name" value="Porphobil_deam"/>
    <property type="match status" value="1"/>
</dbReference>
<dbReference type="InterPro" id="IPR000860">
    <property type="entry name" value="HemC"/>
</dbReference>
<dbReference type="InterPro" id="IPR022419">
    <property type="entry name" value="Porphobilin_deaminase_cofac_BS"/>
</dbReference>
<dbReference type="InterPro" id="IPR022417">
    <property type="entry name" value="Porphobilin_deaminase_N"/>
</dbReference>
<dbReference type="InterPro" id="IPR022418">
    <property type="entry name" value="Porphobilinogen_deaminase_C"/>
</dbReference>
<dbReference type="InterPro" id="IPR036803">
    <property type="entry name" value="Porphobilinogen_deaminase_C_sf"/>
</dbReference>
<dbReference type="NCBIfam" id="TIGR00212">
    <property type="entry name" value="hemC"/>
    <property type="match status" value="1"/>
</dbReference>
<dbReference type="PANTHER" id="PTHR11557">
    <property type="entry name" value="PORPHOBILINOGEN DEAMINASE"/>
    <property type="match status" value="1"/>
</dbReference>
<dbReference type="PANTHER" id="PTHR11557:SF0">
    <property type="entry name" value="PORPHOBILINOGEN DEAMINASE"/>
    <property type="match status" value="1"/>
</dbReference>
<dbReference type="Pfam" id="PF01379">
    <property type="entry name" value="Porphobil_deam"/>
    <property type="match status" value="1"/>
</dbReference>
<dbReference type="Pfam" id="PF03900">
    <property type="entry name" value="Porphobil_deamC"/>
    <property type="match status" value="1"/>
</dbReference>
<dbReference type="PIRSF" id="PIRSF001438">
    <property type="entry name" value="4pyrrol_synth_OHMeBilane_synth"/>
    <property type="match status" value="1"/>
</dbReference>
<dbReference type="PRINTS" id="PR00151">
    <property type="entry name" value="PORPHBDMNASE"/>
</dbReference>
<dbReference type="SUPFAM" id="SSF53850">
    <property type="entry name" value="Periplasmic binding protein-like II"/>
    <property type="match status" value="1"/>
</dbReference>
<dbReference type="SUPFAM" id="SSF54782">
    <property type="entry name" value="Porphobilinogen deaminase (hydroxymethylbilane synthase), C-terminal domain"/>
    <property type="match status" value="1"/>
</dbReference>
<dbReference type="PROSITE" id="PS00533">
    <property type="entry name" value="PORPHOBILINOGEN_DEAM"/>
    <property type="match status" value="1"/>
</dbReference>
<evidence type="ECO:0000255" key="1">
    <source>
        <dbReference type="HAMAP-Rule" id="MF_00260"/>
    </source>
</evidence>
<gene>
    <name evidence="1" type="primary">hemC</name>
    <name type="ordered locus">NATL1_05521</name>
</gene>
<organism>
    <name type="scientific">Prochlorococcus marinus (strain NATL1A)</name>
    <dbReference type="NCBI Taxonomy" id="167555"/>
    <lineage>
        <taxon>Bacteria</taxon>
        <taxon>Bacillati</taxon>
        <taxon>Cyanobacteriota</taxon>
        <taxon>Cyanophyceae</taxon>
        <taxon>Synechococcales</taxon>
        <taxon>Prochlorococcaceae</taxon>
        <taxon>Prochlorococcus</taxon>
    </lineage>
</organism>
<name>HEM3_PROM1</name>
<proteinExistence type="inferred from homology"/>
<comment type="function">
    <text evidence="1">Tetrapolymerization of the monopyrrole PBG into the hydroxymethylbilane pre-uroporphyrinogen in several discrete steps.</text>
</comment>
<comment type="catalytic activity">
    <reaction evidence="1">
        <text>4 porphobilinogen + H2O = hydroxymethylbilane + 4 NH4(+)</text>
        <dbReference type="Rhea" id="RHEA:13185"/>
        <dbReference type="ChEBI" id="CHEBI:15377"/>
        <dbReference type="ChEBI" id="CHEBI:28938"/>
        <dbReference type="ChEBI" id="CHEBI:57845"/>
        <dbReference type="ChEBI" id="CHEBI:58126"/>
        <dbReference type="EC" id="2.5.1.61"/>
    </reaction>
</comment>
<comment type="cofactor">
    <cofactor evidence="1">
        <name>dipyrromethane</name>
        <dbReference type="ChEBI" id="CHEBI:60342"/>
    </cofactor>
    <text evidence="1">Binds 1 dipyrromethane group covalently.</text>
</comment>
<comment type="pathway">
    <text evidence="1">Porphyrin-containing compound metabolism; protoporphyrin-IX biosynthesis; coproporphyrinogen-III from 5-aminolevulinate: step 2/4.</text>
</comment>
<comment type="pathway">
    <text evidence="1">Porphyrin-containing compound metabolism; chlorophyll biosynthesis.</text>
</comment>
<comment type="subunit">
    <text evidence="1">Monomer.</text>
</comment>
<comment type="miscellaneous">
    <text evidence="1">The porphobilinogen subunits are added to the dipyrromethane group.</text>
</comment>
<comment type="similarity">
    <text evidence="1">Belongs to the HMBS family.</text>
</comment>
<keyword id="KW-0149">Chlorophyll biosynthesis</keyword>
<keyword id="KW-0627">Porphyrin biosynthesis</keyword>
<keyword id="KW-0808">Transferase</keyword>
<sequence length="315" mass="34598">MTLDQLRIASRRSQLAMVQTNWVRDELQRAHPDLAITIEAMATQGDKILDVALAKIGDKGLFTKELEAQMLLGHAEIAVHSLKDLPTNLPEGLILGCITEREDPSDALVVNEKNQIHKLETLPEGSVVGTSSLRRLAQLRYHYPHLVFKDVRGNVITRLEKLDSGEYDCLILAAAGLQRLGFANRIHQLIPTDISLHAVGQGALGIECVSGQQKVLDILKTLEHESTSKRCLAERSFLRELEGGCQVPIGVRTEINNNELILEGMVASLDGKRLIRDIKKGSVSSAEEIGIDLANELKGRGAGEILEEIFKSARA</sequence>